<reference key="1">
    <citation type="journal article" date="2005" name="Science">
        <title>Genome sequence of Theileria parva, a bovine pathogen that transforms lymphocytes.</title>
        <authorList>
            <person name="Gardner M.J."/>
            <person name="Bishop R."/>
            <person name="Shah T."/>
            <person name="de Villiers E.P."/>
            <person name="Carlton J.M."/>
            <person name="Hall N."/>
            <person name="Ren Q."/>
            <person name="Paulsen I.T."/>
            <person name="Pain A."/>
            <person name="Berriman M."/>
            <person name="Wilson R.J.M."/>
            <person name="Sato S."/>
            <person name="Ralph S.A."/>
            <person name="Mann D.J."/>
            <person name="Xiong Z."/>
            <person name="Shallom S.J."/>
            <person name="Weidman J."/>
            <person name="Jiang L."/>
            <person name="Lynn J."/>
            <person name="Weaver B."/>
            <person name="Shoaibi A."/>
            <person name="Domingo A.R."/>
            <person name="Wasawo D."/>
            <person name="Crabtree J."/>
            <person name="Wortman J.R."/>
            <person name="Haas B."/>
            <person name="Angiuoli S.V."/>
            <person name="Creasy T.H."/>
            <person name="Lu C."/>
            <person name="Suh B."/>
            <person name="Silva J.C."/>
            <person name="Utterback T.R."/>
            <person name="Feldblyum T.V."/>
            <person name="Pertea M."/>
            <person name="Allen J."/>
            <person name="Nierman W.C."/>
            <person name="Taracha E.L.N."/>
            <person name="Salzberg S.L."/>
            <person name="White O.R."/>
            <person name="Fitzhugh H.A."/>
            <person name="Morzaria S."/>
            <person name="Venter J.C."/>
            <person name="Fraser C.M."/>
            <person name="Nene V."/>
        </authorList>
    </citation>
    <scope>NUCLEOTIDE SEQUENCE [LARGE SCALE GENOMIC DNA]</scope>
    <source>
        <strain>Muguga</strain>
    </source>
</reference>
<name>TCTP_THEPA</name>
<dbReference type="EMBL" id="AAGK01000001">
    <property type="protein sequence ID" value="EAN33520.1"/>
    <property type="molecule type" value="Genomic_DNA"/>
</dbReference>
<dbReference type="RefSeq" id="XP_765803.1">
    <property type="nucleotide sequence ID" value="XM_760710.1"/>
</dbReference>
<dbReference type="SMR" id="Q4N938"/>
<dbReference type="FunCoup" id="Q4N938">
    <property type="interactions" value="272"/>
</dbReference>
<dbReference type="STRING" id="5875.Q4N938"/>
<dbReference type="EnsemblProtists" id="EAN33520">
    <property type="protein sequence ID" value="EAN33520"/>
    <property type="gene ID" value="TP01_0276"/>
</dbReference>
<dbReference type="GeneID" id="3503393"/>
<dbReference type="KEGG" id="tpv:TP01_0276"/>
<dbReference type="VEuPathDB" id="PiroplasmaDB:TpMuguga_01g00276"/>
<dbReference type="eggNOG" id="KOG1727">
    <property type="taxonomic scope" value="Eukaryota"/>
</dbReference>
<dbReference type="InParanoid" id="Q4N938"/>
<dbReference type="OMA" id="CAMITEG"/>
<dbReference type="Proteomes" id="UP000001949">
    <property type="component" value="Unassembled WGS sequence"/>
</dbReference>
<dbReference type="GO" id="GO:0005737">
    <property type="term" value="C:cytoplasm"/>
    <property type="evidence" value="ECO:0007669"/>
    <property type="project" value="UniProtKB-SubCell"/>
</dbReference>
<dbReference type="GO" id="GO:0005509">
    <property type="term" value="F:calcium ion binding"/>
    <property type="evidence" value="ECO:0007669"/>
    <property type="project" value="TreeGrafter"/>
</dbReference>
<dbReference type="Gene3D" id="2.170.150.10">
    <property type="entry name" value="Metal Binding Protein, Guanine Nucleotide Exchange Factor, Chain A"/>
    <property type="match status" value="1"/>
</dbReference>
<dbReference type="InterPro" id="IPR011057">
    <property type="entry name" value="Mss4-like_sf"/>
</dbReference>
<dbReference type="InterPro" id="IPR011323">
    <property type="entry name" value="Mss4/transl-control_tumour"/>
</dbReference>
<dbReference type="InterPro" id="IPR034737">
    <property type="entry name" value="TCTP"/>
</dbReference>
<dbReference type="InterPro" id="IPR018103">
    <property type="entry name" value="Translation_control_tumour_CS"/>
</dbReference>
<dbReference type="InterPro" id="IPR018105">
    <property type="entry name" value="Translational_control_tumour_p"/>
</dbReference>
<dbReference type="PANTHER" id="PTHR11991">
    <property type="entry name" value="TRANSLATIONALLY CONTROLLED TUMOR PROTEIN-RELATED"/>
    <property type="match status" value="1"/>
</dbReference>
<dbReference type="PANTHER" id="PTHR11991:SF0">
    <property type="entry name" value="TRANSLATIONALLY-CONTROLLED TUMOR PROTEIN"/>
    <property type="match status" value="1"/>
</dbReference>
<dbReference type="Pfam" id="PF00838">
    <property type="entry name" value="TCTP"/>
    <property type="match status" value="1"/>
</dbReference>
<dbReference type="PRINTS" id="PR01653">
    <property type="entry name" value="TCTPROTEIN"/>
</dbReference>
<dbReference type="SUPFAM" id="SSF51316">
    <property type="entry name" value="Mss4-like"/>
    <property type="match status" value="1"/>
</dbReference>
<dbReference type="PROSITE" id="PS01003">
    <property type="entry name" value="TCTP_2"/>
    <property type="match status" value="1"/>
</dbReference>
<dbReference type="PROSITE" id="PS51797">
    <property type="entry name" value="TCTP_3"/>
    <property type="match status" value="1"/>
</dbReference>
<evidence type="ECO:0000250" key="1"/>
<evidence type="ECO:0000255" key="2">
    <source>
        <dbReference type="PROSITE-ProRule" id="PRU01133"/>
    </source>
</evidence>
<proteinExistence type="inferred from homology"/>
<gene>
    <name type="primary">TCTP</name>
    <name type="ordered locus">TP01_0276</name>
</gene>
<comment type="function">
    <text evidence="1">Involved in calcium binding and microtubule stabilization.</text>
</comment>
<comment type="subcellular location">
    <subcellularLocation>
        <location evidence="1">Cytoplasm</location>
    </subcellularLocation>
</comment>
<comment type="similarity">
    <text evidence="2">Belongs to the TCTP family.</text>
</comment>
<protein>
    <recommendedName>
        <fullName>Translationally-controlled tumor protein homolog</fullName>
        <shortName>TCTP</shortName>
    </recommendedName>
</protein>
<accession>Q4N938</accession>
<feature type="chain" id="PRO_0000252311" description="Translationally-controlled tumor protein homolog">
    <location>
        <begin position="1"/>
        <end position="173"/>
    </location>
</feature>
<feature type="domain" description="TCTP" evidence="2">
    <location>
        <begin position="1"/>
        <end position="173"/>
    </location>
</feature>
<organism>
    <name type="scientific">Theileria parva</name>
    <name type="common">East coast fever infection agent</name>
    <dbReference type="NCBI Taxonomy" id="5875"/>
    <lineage>
        <taxon>Eukaryota</taxon>
        <taxon>Sar</taxon>
        <taxon>Alveolata</taxon>
        <taxon>Apicomplexa</taxon>
        <taxon>Aconoidasida</taxon>
        <taxon>Piroplasmida</taxon>
        <taxon>Theileriidae</taxon>
        <taxon>Theileria</taxon>
    </lineage>
</organism>
<sequence length="173" mass="19925">MKVYKDLYSNDEVCSDAYDHHDPFDNADLSSVAFEVKTSKVPKGEEDYGIGYNDEEGADQMNVDPNVEMVVDVVDKFGLQSLSLTKKDYSSYIRKYIQRLVATLQEKNPERVEPFKTTVSDFVKHVLANFEDFEFYVGESLDYEAGLVYAYYKGEEVSPRLVFLKDGLVEERY</sequence>
<keyword id="KW-0106">Calcium</keyword>
<keyword id="KW-0963">Cytoplasm</keyword>
<keyword id="KW-1185">Reference proteome</keyword>